<evidence type="ECO:0000250" key="1"/>
<evidence type="ECO:0000250" key="2">
    <source>
        <dbReference type="UniProtKB" id="Q9Y4X3"/>
    </source>
</evidence>
<evidence type="ECO:0000255" key="3"/>
<evidence type="ECO:0000269" key="4">
    <source>
    </source>
</evidence>
<evidence type="ECO:0000269" key="5">
    <source>
    </source>
</evidence>
<evidence type="ECO:0000303" key="6">
    <source>
    </source>
</evidence>
<evidence type="ECO:0000305" key="7"/>
<reference key="1">
    <citation type="journal article" date="1999" name="Biochem. Biophys. Res. Commun.">
        <title>Isolation of ALP, a novel divergent murine CC chemokine with a unique carboxy terminal extension.</title>
        <authorList>
            <person name="Hromas R."/>
            <person name="Broxmeyer H.E."/>
            <person name="Kim C."/>
            <person name="Christopherson K. II"/>
            <person name="Hou Y.-H."/>
        </authorList>
    </citation>
    <scope>NUCLEOTIDE SEQUENCE [MRNA] (ISOFORM 1)</scope>
</reference>
<reference key="2">
    <citation type="journal article" date="1999" name="FEBS Lett.">
        <title>Molecular cloning of a novel CC chemokine, interleukin-11 receptor alpha-locus chemokine (ILC), which is located on chromosome 9p13 and a potential homologue of a CC chemokine encoded by molluscum contagiosum virus.</title>
        <authorList>
            <person name="Ishikawa-Mochizuki I."/>
            <person name="Kitaura M."/>
            <person name="Baba M."/>
            <person name="Nakayama T."/>
            <person name="Izawa D."/>
            <person name="Imai T."/>
            <person name="Yamada H."/>
            <person name="Hieshima K."/>
            <person name="Suzuki R."/>
            <person name="Nomiyama H."/>
            <person name="Yoshie O."/>
        </authorList>
    </citation>
    <scope>NUCLEOTIDE SEQUENCE [MRNA] (ISOFORM 1)</scope>
</reference>
<reference key="3">
    <citation type="journal article" date="1999" name="Proc. Natl. Acad. Sci. U.S.A.">
        <title>CTACK, a skin-associated chemokine that preferentially attracts skin-homing memory T cells.</title>
        <authorList>
            <person name="Morales J."/>
            <person name="Homey B."/>
            <person name="Vicari A.P."/>
            <person name="Hudak S."/>
            <person name="Oldham E."/>
            <person name="Hedrick J."/>
            <person name="Orozco R."/>
            <person name="Copeland N.G."/>
            <person name="Jenkins N.A."/>
            <person name="McEvoy L.M."/>
            <person name="Zlotnik A."/>
        </authorList>
    </citation>
    <scope>NUCLEOTIDE SEQUENCE [MRNA] (ISOFORM 1)</scope>
</reference>
<reference key="4">
    <citation type="journal article" date="2005" name="Science">
        <title>The transcriptional landscape of the mammalian genome.</title>
        <authorList>
            <person name="Carninci P."/>
            <person name="Kasukawa T."/>
            <person name="Katayama S."/>
            <person name="Gough J."/>
            <person name="Frith M.C."/>
            <person name="Maeda N."/>
            <person name="Oyama R."/>
            <person name="Ravasi T."/>
            <person name="Lenhard B."/>
            <person name="Wells C."/>
            <person name="Kodzius R."/>
            <person name="Shimokawa K."/>
            <person name="Bajic V.B."/>
            <person name="Brenner S.E."/>
            <person name="Batalov S."/>
            <person name="Forrest A.R."/>
            <person name="Zavolan M."/>
            <person name="Davis M.J."/>
            <person name="Wilming L.G."/>
            <person name="Aidinis V."/>
            <person name="Allen J.E."/>
            <person name="Ambesi-Impiombato A."/>
            <person name="Apweiler R."/>
            <person name="Aturaliya R.N."/>
            <person name="Bailey T.L."/>
            <person name="Bansal M."/>
            <person name="Baxter L."/>
            <person name="Beisel K.W."/>
            <person name="Bersano T."/>
            <person name="Bono H."/>
            <person name="Chalk A.M."/>
            <person name="Chiu K.P."/>
            <person name="Choudhary V."/>
            <person name="Christoffels A."/>
            <person name="Clutterbuck D.R."/>
            <person name="Crowe M.L."/>
            <person name="Dalla E."/>
            <person name="Dalrymple B.P."/>
            <person name="de Bono B."/>
            <person name="Della Gatta G."/>
            <person name="di Bernardo D."/>
            <person name="Down T."/>
            <person name="Engstrom P."/>
            <person name="Fagiolini M."/>
            <person name="Faulkner G."/>
            <person name="Fletcher C.F."/>
            <person name="Fukushima T."/>
            <person name="Furuno M."/>
            <person name="Futaki S."/>
            <person name="Gariboldi M."/>
            <person name="Georgii-Hemming P."/>
            <person name="Gingeras T.R."/>
            <person name="Gojobori T."/>
            <person name="Green R.E."/>
            <person name="Gustincich S."/>
            <person name="Harbers M."/>
            <person name="Hayashi Y."/>
            <person name="Hensch T.K."/>
            <person name="Hirokawa N."/>
            <person name="Hill D."/>
            <person name="Huminiecki L."/>
            <person name="Iacono M."/>
            <person name="Ikeo K."/>
            <person name="Iwama A."/>
            <person name="Ishikawa T."/>
            <person name="Jakt M."/>
            <person name="Kanapin A."/>
            <person name="Katoh M."/>
            <person name="Kawasawa Y."/>
            <person name="Kelso J."/>
            <person name="Kitamura H."/>
            <person name="Kitano H."/>
            <person name="Kollias G."/>
            <person name="Krishnan S.P."/>
            <person name="Kruger A."/>
            <person name="Kummerfeld S.K."/>
            <person name="Kurochkin I.V."/>
            <person name="Lareau L.F."/>
            <person name="Lazarevic D."/>
            <person name="Lipovich L."/>
            <person name="Liu J."/>
            <person name="Liuni S."/>
            <person name="McWilliam S."/>
            <person name="Madan Babu M."/>
            <person name="Madera M."/>
            <person name="Marchionni L."/>
            <person name="Matsuda H."/>
            <person name="Matsuzawa S."/>
            <person name="Miki H."/>
            <person name="Mignone F."/>
            <person name="Miyake S."/>
            <person name="Morris K."/>
            <person name="Mottagui-Tabar S."/>
            <person name="Mulder N."/>
            <person name="Nakano N."/>
            <person name="Nakauchi H."/>
            <person name="Ng P."/>
            <person name="Nilsson R."/>
            <person name="Nishiguchi S."/>
            <person name="Nishikawa S."/>
            <person name="Nori F."/>
            <person name="Ohara O."/>
            <person name="Okazaki Y."/>
            <person name="Orlando V."/>
            <person name="Pang K.C."/>
            <person name="Pavan W.J."/>
            <person name="Pavesi G."/>
            <person name="Pesole G."/>
            <person name="Petrovsky N."/>
            <person name="Piazza S."/>
            <person name="Reed J."/>
            <person name="Reid J.F."/>
            <person name="Ring B.Z."/>
            <person name="Ringwald M."/>
            <person name="Rost B."/>
            <person name="Ruan Y."/>
            <person name="Salzberg S.L."/>
            <person name="Sandelin A."/>
            <person name="Schneider C."/>
            <person name="Schoenbach C."/>
            <person name="Sekiguchi K."/>
            <person name="Semple C.A."/>
            <person name="Seno S."/>
            <person name="Sessa L."/>
            <person name="Sheng Y."/>
            <person name="Shibata Y."/>
            <person name="Shimada H."/>
            <person name="Shimada K."/>
            <person name="Silva D."/>
            <person name="Sinclair B."/>
            <person name="Sperling S."/>
            <person name="Stupka E."/>
            <person name="Sugiura K."/>
            <person name="Sultana R."/>
            <person name="Takenaka Y."/>
            <person name="Taki K."/>
            <person name="Tammoja K."/>
            <person name="Tan S.L."/>
            <person name="Tang S."/>
            <person name="Taylor M.S."/>
            <person name="Tegner J."/>
            <person name="Teichmann S.A."/>
            <person name="Ueda H.R."/>
            <person name="van Nimwegen E."/>
            <person name="Verardo R."/>
            <person name="Wei C.L."/>
            <person name="Yagi K."/>
            <person name="Yamanishi H."/>
            <person name="Zabarovsky E."/>
            <person name="Zhu S."/>
            <person name="Zimmer A."/>
            <person name="Hide W."/>
            <person name="Bult C."/>
            <person name="Grimmond S.M."/>
            <person name="Teasdale R.D."/>
            <person name="Liu E.T."/>
            <person name="Brusic V."/>
            <person name="Quackenbush J."/>
            <person name="Wahlestedt C."/>
            <person name="Mattick J.S."/>
            <person name="Hume D.A."/>
            <person name="Kai C."/>
            <person name="Sasaki D."/>
            <person name="Tomaru Y."/>
            <person name="Fukuda S."/>
            <person name="Kanamori-Katayama M."/>
            <person name="Suzuki M."/>
            <person name="Aoki J."/>
            <person name="Arakawa T."/>
            <person name="Iida J."/>
            <person name="Imamura K."/>
            <person name="Itoh M."/>
            <person name="Kato T."/>
            <person name="Kawaji H."/>
            <person name="Kawagashira N."/>
            <person name="Kawashima T."/>
            <person name="Kojima M."/>
            <person name="Kondo S."/>
            <person name="Konno H."/>
            <person name="Nakano K."/>
            <person name="Ninomiya N."/>
            <person name="Nishio T."/>
            <person name="Okada M."/>
            <person name="Plessy C."/>
            <person name="Shibata K."/>
            <person name="Shiraki T."/>
            <person name="Suzuki S."/>
            <person name="Tagami M."/>
            <person name="Waki K."/>
            <person name="Watahiki A."/>
            <person name="Okamura-Oho Y."/>
            <person name="Suzuki H."/>
            <person name="Kawai J."/>
            <person name="Hayashizaki Y."/>
        </authorList>
    </citation>
    <scope>NUCLEOTIDE SEQUENCE [LARGE SCALE MRNA] (ISOFORMS 1 AND 2)</scope>
    <source>
        <strain>C57BL/6J</strain>
        <tissue>Placenta</tissue>
    </source>
</reference>
<reference key="5">
    <citation type="journal article" date="2004" name="Genome Res.">
        <title>The status, quality, and expansion of the NIH full-length cDNA project: the Mammalian Gene Collection (MGC).</title>
        <authorList>
            <consortium name="The MGC Project Team"/>
        </authorList>
    </citation>
    <scope>NUCLEOTIDE SEQUENCE [LARGE SCALE MRNA] (ISOFORM 1)</scope>
    <source>
        <tissue>Thymus</tissue>
    </source>
</reference>
<reference key="6">
    <citation type="journal article" date="1999" name="J. Biol. Chem.">
        <title>ESkine, a novel beta-chemokine, is differentially spliced to produce secretable and nuclear targeted isoforms.</title>
        <authorList>
            <person name="Baird J.W."/>
            <person name="Nibbs R.J.B."/>
            <person name="Komai-Koma M."/>
            <person name="Connolly J.A."/>
            <person name="Ottersbach K."/>
            <person name="Clark-Lewis I."/>
            <person name="Liew F.Y."/>
            <person name="Graham G.J."/>
        </authorList>
    </citation>
    <scope>SUBCELLULAR LOCATION</scope>
    <scope>ALTERNATIVE SPLICING</scope>
    <source>
        <tissue>Placenta</tissue>
        <tissue>Testis</tissue>
    </source>
</reference>
<reference key="7">
    <citation type="journal article" date="2002" name="J. Immunol.">
        <title>The chemokine ESkine/CCL27 displays novel modes of intracrine and paracrine function.</title>
        <authorList>
            <person name="Gortz A."/>
            <person name="Nibbs R.J.B."/>
            <person name="McLean P."/>
            <person name="Jarmin D."/>
            <person name="Lambie W."/>
            <person name="Baird J.W."/>
            <person name="Graham G.J."/>
        </authorList>
    </citation>
    <scope>SUBCELLULAR LOCATION</scope>
</reference>
<dbReference type="EMBL" id="AF099931">
    <property type="protein sequence ID" value="AAD04163.1"/>
    <property type="molecule type" value="mRNA"/>
</dbReference>
<dbReference type="EMBL" id="AB013398">
    <property type="protein sequence ID" value="BAA88474.1"/>
    <property type="molecule type" value="mRNA"/>
</dbReference>
<dbReference type="EMBL" id="AF082392">
    <property type="protein sequence ID" value="AAD41237.1"/>
    <property type="molecule type" value="mRNA"/>
</dbReference>
<dbReference type="EMBL" id="AK005520">
    <property type="protein sequence ID" value="BAB24095.1"/>
    <property type="molecule type" value="mRNA"/>
</dbReference>
<dbReference type="EMBL" id="AK005398">
    <property type="protein sequence ID" value="BAB24001.1"/>
    <property type="molecule type" value="mRNA"/>
</dbReference>
<dbReference type="EMBL" id="BC028511">
    <property type="protein sequence ID" value="AAH28511.1"/>
    <property type="molecule type" value="mRNA"/>
</dbReference>
<dbReference type="EMBL" id="BC107226">
    <property type="protein sequence ID" value="AAI07227.1"/>
    <property type="molecule type" value="mRNA"/>
</dbReference>
<dbReference type="CCDS" id="CCDS18072.1">
    <molecule id="Q9Z1X0-1"/>
</dbReference>
<dbReference type="RefSeq" id="NP_001157518.1">
    <molecule id="Q9Z1X0-1"/>
    <property type="nucleotide sequence ID" value="NM_001164046.1"/>
</dbReference>
<dbReference type="RefSeq" id="NP_001186888.1">
    <molecule id="Q9Z1X0-1"/>
    <property type="nucleotide sequence ID" value="NM_001199959.1"/>
</dbReference>
<dbReference type="RefSeq" id="NP_001186890.1">
    <molecule id="Q9Z1X0-2"/>
    <property type="nucleotide sequence ID" value="NM_001199961.1"/>
</dbReference>
<dbReference type="RefSeq" id="NP_001186891.1">
    <molecule id="Q9Z1X0-2"/>
    <property type="nucleotide sequence ID" value="NM_001199962.1"/>
</dbReference>
<dbReference type="RefSeq" id="NP_001186894.1">
    <property type="nucleotide sequence ID" value="NM_001199965.1"/>
</dbReference>
<dbReference type="RefSeq" id="NP_001254631.1">
    <property type="nucleotide sequence ID" value="NM_001267702.1"/>
</dbReference>
<dbReference type="RefSeq" id="NP_001254633.1">
    <property type="nucleotide sequence ID" value="NM_001267704.1"/>
</dbReference>
<dbReference type="RefSeq" id="NP_035466.1">
    <property type="nucleotide sequence ID" value="NM_011336.1"/>
</dbReference>
<dbReference type="SMR" id="Q9Z1X0"/>
<dbReference type="DIP" id="DIP-5905N"/>
<dbReference type="FunCoup" id="Q9Z1X0">
    <property type="interactions" value="713"/>
</dbReference>
<dbReference type="STRING" id="10090.ENSMUSP00000137284"/>
<dbReference type="PhosphoSitePlus" id="Q9Z1X0"/>
<dbReference type="PaxDb" id="10090-ENSMUSP00000095726"/>
<dbReference type="DNASU" id="20301"/>
<dbReference type="Ensembl" id="ENSMUST00000098122.3">
    <molecule id="Q9Z1X0-1"/>
    <property type="protein sequence ID" value="ENSMUSP00000095726.3"/>
    <property type="gene ID" value="ENSMUSG00000073877.11"/>
</dbReference>
<dbReference type="Ensembl" id="ENSMUST00000108018.9">
    <molecule id="Q9Z1X0-2"/>
    <property type="protein sequence ID" value="ENSMUSP00000103653.3"/>
    <property type="gene ID" value="ENSMUSG00000073877.11"/>
</dbReference>
<dbReference type="Ensembl" id="ENSMUST00000177785.3">
    <molecule id="Q9Z1X0-1"/>
    <property type="protein sequence ID" value="ENSMUSP00000137284.2"/>
    <property type="gene ID" value="ENSMUSG00000096826.3"/>
</dbReference>
<dbReference type="GeneID" id="20301"/>
<dbReference type="KEGG" id="mmu:100039863"/>
<dbReference type="KEGG" id="mmu:100040048"/>
<dbReference type="KEGG" id="mmu:20301"/>
<dbReference type="UCSC" id="uc008sln.2">
    <molecule id="Q9Z1X0-1"/>
    <property type="organism name" value="mouse"/>
</dbReference>
<dbReference type="UCSC" id="uc012dcl.1">
    <molecule id="Q9Z1X0-2"/>
    <property type="organism name" value="mouse"/>
</dbReference>
<dbReference type="AGR" id="MGI:1343459"/>
<dbReference type="CTD" id="100039863"/>
<dbReference type="CTD" id="100040048"/>
<dbReference type="CTD" id="20301"/>
<dbReference type="MGI" id="MGI:1343459">
    <property type="gene designation" value="Ccl27"/>
</dbReference>
<dbReference type="VEuPathDB" id="HostDB:ENSMUSG00000073877"/>
<dbReference type="VEuPathDB" id="HostDB:ENSMUSG00000093828"/>
<dbReference type="VEuPathDB" id="HostDB:ENSMUSG00000095247"/>
<dbReference type="VEuPathDB" id="HostDB:ENSMUSG00000096826"/>
<dbReference type="eggNOG" id="ENOG502SZGD">
    <property type="taxonomic scope" value="Eukaryota"/>
</dbReference>
<dbReference type="GeneTree" id="ENSGT00530000063923"/>
<dbReference type="HOGENOM" id="CLU_1885093_0_0_1"/>
<dbReference type="InParanoid" id="Q9Z1X0"/>
<dbReference type="OMA" id="FLEQTML"/>
<dbReference type="OrthoDB" id="8905061at2759"/>
<dbReference type="PhylomeDB" id="Q9Z1X0"/>
<dbReference type="TreeFam" id="TF337014"/>
<dbReference type="Reactome" id="R-MMU-380108">
    <property type="pathway name" value="Chemokine receptors bind chemokines"/>
</dbReference>
<dbReference type="Reactome" id="R-MMU-418594">
    <property type="pathway name" value="G alpha (i) signalling events"/>
</dbReference>
<dbReference type="BioGRID-ORCS" id="100039863">
    <property type="hits" value="2 hits in 33 CRISPR screens"/>
</dbReference>
<dbReference type="BioGRID-ORCS" id="100039939">
    <property type="hits" value="1 hit in 5 CRISPR screens"/>
</dbReference>
<dbReference type="BioGRID-ORCS" id="100040048">
    <property type="hits" value="5 hits in 40 CRISPR screens"/>
</dbReference>
<dbReference type="BioGRID-ORCS" id="100861978">
    <property type="hits" value="1 hit in 5 CRISPR screens"/>
</dbReference>
<dbReference type="BioGRID-ORCS" id="20301">
    <property type="hits" value="1 hit in 47 CRISPR screens"/>
</dbReference>
<dbReference type="ChiTaRS" id="Ccl27a">
    <property type="organism name" value="mouse"/>
</dbReference>
<dbReference type="PRO" id="PR:Q9Z1X0"/>
<dbReference type="Proteomes" id="UP000000589">
    <property type="component" value="Chromosome 4"/>
</dbReference>
<dbReference type="RNAct" id="Q9Z1X0">
    <property type="molecule type" value="protein"/>
</dbReference>
<dbReference type="Bgee" id="ENSMUSG00000073877">
    <property type="expression patterns" value="Expressed in spermatocyte and 68 other cell types or tissues"/>
</dbReference>
<dbReference type="GO" id="GO:0005576">
    <property type="term" value="C:extracellular region"/>
    <property type="evidence" value="ECO:0000314"/>
    <property type="project" value="MGI"/>
</dbReference>
<dbReference type="GO" id="GO:0005615">
    <property type="term" value="C:extracellular space"/>
    <property type="evidence" value="ECO:0007669"/>
    <property type="project" value="UniProtKB-KW"/>
</dbReference>
<dbReference type="GO" id="GO:0005634">
    <property type="term" value="C:nucleus"/>
    <property type="evidence" value="ECO:0000314"/>
    <property type="project" value="MGI"/>
</dbReference>
<dbReference type="GO" id="GO:0008009">
    <property type="term" value="F:chemokine activity"/>
    <property type="evidence" value="ECO:0007669"/>
    <property type="project" value="InterPro"/>
</dbReference>
<dbReference type="GO" id="GO:0005125">
    <property type="term" value="F:cytokine activity"/>
    <property type="evidence" value="ECO:0000314"/>
    <property type="project" value="MGI"/>
</dbReference>
<dbReference type="GO" id="GO:0006955">
    <property type="term" value="P:immune response"/>
    <property type="evidence" value="ECO:0007669"/>
    <property type="project" value="InterPro"/>
</dbReference>
<dbReference type="GO" id="GO:0071674">
    <property type="term" value="P:mononuclear cell migration"/>
    <property type="evidence" value="ECO:0000314"/>
    <property type="project" value="MGI"/>
</dbReference>
<dbReference type="GO" id="GO:0071677">
    <property type="term" value="P:positive regulation of mononuclear cell migration"/>
    <property type="evidence" value="ECO:0000314"/>
    <property type="project" value="MGI"/>
</dbReference>
<dbReference type="GO" id="GO:0010820">
    <property type="term" value="P:positive regulation of T cell chemotaxis"/>
    <property type="evidence" value="ECO:0000314"/>
    <property type="project" value="MGI"/>
</dbReference>
<dbReference type="GO" id="GO:0032956">
    <property type="term" value="P:regulation of actin cytoskeleton organization"/>
    <property type="evidence" value="ECO:0000314"/>
    <property type="project" value="MGI"/>
</dbReference>
<dbReference type="FunFam" id="2.40.50.40:FF:000019">
    <property type="entry name" value="C-C motif chemokine 27"/>
    <property type="match status" value="1"/>
</dbReference>
<dbReference type="Gene3D" id="2.40.50.40">
    <property type="match status" value="1"/>
</dbReference>
<dbReference type="InterPro" id="IPR001811">
    <property type="entry name" value="Chemokine_IL8-like_dom"/>
</dbReference>
<dbReference type="InterPro" id="IPR036048">
    <property type="entry name" value="Interleukin_8-like_sf"/>
</dbReference>
<dbReference type="Pfam" id="PF00048">
    <property type="entry name" value="IL8"/>
    <property type="match status" value="1"/>
</dbReference>
<dbReference type="SMART" id="SM00199">
    <property type="entry name" value="SCY"/>
    <property type="match status" value="1"/>
</dbReference>
<dbReference type="SUPFAM" id="SSF54117">
    <property type="entry name" value="Interleukin 8-like chemokines"/>
    <property type="match status" value="1"/>
</dbReference>
<sequence length="120" mass="13464">MMEGLSPASSLPLLLLLLSPAPEAALPLPSSTSCCTQLYRQPLPSRLLRRIVHMELQEADGDCHLQAVVLHLARRSVCVHPQNRSLARWLERQGKRLQGTVPSLNLVLQKKMYSHPQQQN</sequence>
<organism>
    <name type="scientific">Mus musculus</name>
    <name type="common">Mouse</name>
    <dbReference type="NCBI Taxonomy" id="10090"/>
    <lineage>
        <taxon>Eukaryota</taxon>
        <taxon>Metazoa</taxon>
        <taxon>Chordata</taxon>
        <taxon>Craniata</taxon>
        <taxon>Vertebrata</taxon>
        <taxon>Euteleostomi</taxon>
        <taxon>Mammalia</taxon>
        <taxon>Eutheria</taxon>
        <taxon>Euarchontoglires</taxon>
        <taxon>Glires</taxon>
        <taxon>Rodentia</taxon>
        <taxon>Myomorpha</taxon>
        <taxon>Muroidea</taxon>
        <taxon>Muridae</taxon>
        <taxon>Murinae</taxon>
        <taxon>Mus</taxon>
        <taxon>Mus</taxon>
    </lineage>
</organism>
<keyword id="KW-0025">Alternative splicing</keyword>
<keyword id="KW-0202">Cytokine</keyword>
<keyword id="KW-1015">Disulfide bond</keyword>
<keyword id="KW-0539">Nucleus</keyword>
<keyword id="KW-1185">Reference proteome</keyword>
<keyword id="KW-0964">Secreted</keyword>
<keyword id="KW-0732">Signal</keyword>
<protein>
    <recommendedName>
        <fullName>C-C motif chemokine 27</fullName>
    </recommendedName>
    <alternativeName>
        <fullName>CC chemokine ILC</fullName>
    </alternativeName>
    <alternativeName>
        <fullName>Cutaneous T-cell-attracting chemokine</fullName>
        <shortName>CTACK</shortName>
    </alternativeName>
    <alternativeName>
        <fullName>ESkine</fullName>
    </alternativeName>
    <alternativeName>
        <fullName>IL-11 R-alpha-locus chemokine</fullName>
        <shortName>ALP</shortName>
        <shortName>mILC</shortName>
    </alternativeName>
    <alternativeName>
        <fullName>Skinkine</fullName>
    </alternativeName>
    <alternativeName>
        <fullName>Small-inducible cytokine A27</fullName>
    </alternativeName>
</protein>
<accession>Q9Z1X0</accession>
<accession>Q3KNL1</accession>
<accession>Q9DAU6</accession>
<accession>Q9DAZ4</accession>
<comment type="function">
    <text>Chemotactic factor that attracts skin-associated memory T-lymphocytes. May play a role in mediating homing of lymphocytes to cutaneous sites. May play a role in cell migration during embryogenesis. Nuclear forms may facilitate cellular migration by inducing cytoskeletal relaxation. Binds to CCR10.</text>
</comment>
<comment type="subunit">
    <text evidence="2">Monomer, dimer, and tetramer. Heparin avidly promotes oligomerization. Interacts with TNFAIP6 (via Link domain).</text>
</comment>
<comment type="subcellular location">
    <molecule>Isoform 1</molecule>
    <subcellularLocation>
        <location evidence="4">Secreted</location>
    </subcellularLocation>
    <subcellularLocation>
        <location evidence="4">Nucleus</location>
    </subcellularLocation>
    <text evidence="4">May also be nuclear when following receptor (CCR10)-mediated internalization.</text>
</comment>
<comment type="subcellular location">
    <molecule>Isoform 2</molecule>
    <subcellularLocation>
        <location evidence="4 5">Nucleus</location>
    </subcellularLocation>
</comment>
<comment type="alternative products">
    <event type="alternative splicing"/>
    <isoform>
        <id>Q9Z1X0-1</id>
        <name>1</name>
        <sequence type="displayed"/>
    </isoform>
    <isoform>
        <id>Q9Z1X0-2</id>
        <name>2</name>
        <name>PESKY</name>
        <sequence type="described" ref="VSP_001065"/>
    </isoform>
</comment>
<comment type="tissue specificity">
    <text>Isoform 1 is predominantly expressed in placenta and weakly in skin. Isoform 2 is predominantly expressed in testes and brain, weakly in kidney and liver and even lower in heart and muscle. Low expression of both isoforms in other tissues.</text>
</comment>
<comment type="developmental stage">
    <text>Expressed during development.</text>
</comment>
<comment type="similarity">
    <text evidence="7">Belongs to the intercrine beta (chemokine CC) family.</text>
</comment>
<comment type="caution">
    <text evidence="7">It is uncertain whether Met-1 or Met-2 is the initiator.</text>
</comment>
<comment type="online information" name="Wikipedia">
    <link uri="https://en.wikipedia.org/wiki/CCL27"/>
    <text>CCL27 entry</text>
</comment>
<proteinExistence type="evidence at transcript level"/>
<gene>
    <name type="primary">Ccl27</name>
    <name type="synonym">Ilc</name>
    <name type="synonym">Scya27</name>
</gene>
<feature type="signal peptide" evidence="3">
    <location>
        <begin position="1"/>
        <end position="25"/>
    </location>
</feature>
<feature type="chain" id="PRO_0000005240" description="C-C motif chemokine 27">
    <location>
        <begin position="26"/>
        <end position="120"/>
    </location>
</feature>
<feature type="disulfide bond" evidence="1">
    <location>
        <begin position="34"/>
        <end position="63"/>
    </location>
</feature>
<feature type="disulfide bond" evidence="1">
    <location>
        <begin position="35"/>
        <end position="78"/>
    </location>
</feature>
<feature type="splice variant" id="VSP_001065" description="In isoform 2." evidence="6">
    <original>MMEGLSPASSLPLLLLLLSPAPEA</original>
    <variation>MWRRERSPMSPTSQRLSLEAPSLPLRSWHPWNKTKQKQE</variation>
    <location>
        <begin position="1"/>
        <end position="24"/>
    </location>
</feature>
<feature type="sequence conflict" description="In Ref. 1; AAD04163, 2; BAA88474, 3; AAD41237 and 4; BAB24001." evidence="7" ref="1 2 3 4">
    <original>H</original>
    <variation>N</variation>
    <location>
        <position position="115"/>
    </location>
</feature>
<name>CCL27_MOUSE</name>